<dbReference type="EMBL" id="AP009374">
    <property type="protein sequence ID" value="BAF50494.1"/>
    <property type="molecule type" value="Genomic_DNA"/>
</dbReference>
<dbReference type="RefSeq" id="YP_001123670.1">
    <property type="nucleotide sequence ID" value="NC_009273.1"/>
</dbReference>
<dbReference type="SMR" id="A4QLD9"/>
<dbReference type="GeneID" id="4961970"/>
<dbReference type="GO" id="GO:0009507">
    <property type="term" value="C:chloroplast"/>
    <property type="evidence" value="ECO:0007669"/>
    <property type="project" value="UniProtKB-SubCell"/>
</dbReference>
<dbReference type="GO" id="GO:1990904">
    <property type="term" value="C:ribonucleoprotein complex"/>
    <property type="evidence" value="ECO:0007669"/>
    <property type="project" value="UniProtKB-KW"/>
</dbReference>
<dbReference type="GO" id="GO:0005840">
    <property type="term" value="C:ribosome"/>
    <property type="evidence" value="ECO:0007669"/>
    <property type="project" value="UniProtKB-KW"/>
</dbReference>
<dbReference type="GO" id="GO:0019843">
    <property type="term" value="F:rRNA binding"/>
    <property type="evidence" value="ECO:0007669"/>
    <property type="project" value="UniProtKB-UniRule"/>
</dbReference>
<dbReference type="GO" id="GO:0003735">
    <property type="term" value="F:structural constituent of ribosome"/>
    <property type="evidence" value="ECO:0007669"/>
    <property type="project" value="InterPro"/>
</dbReference>
<dbReference type="GO" id="GO:0006412">
    <property type="term" value="P:translation"/>
    <property type="evidence" value="ECO:0007669"/>
    <property type="project" value="UniProtKB-UniRule"/>
</dbReference>
<dbReference type="FunFam" id="3.30.420.80:FF:000003">
    <property type="entry name" value="30S ribosomal protein S11, chloroplastic"/>
    <property type="match status" value="1"/>
</dbReference>
<dbReference type="Gene3D" id="3.30.420.80">
    <property type="entry name" value="Ribosomal protein S11"/>
    <property type="match status" value="1"/>
</dbReference>
<dbReference type="HAMAP" id="MF_01310">
    <property type="entry name" value="Ribosomal_uS11"/>
    <property type="match status" value="1"/>
</dbReference>
<dbReference type="InterPro" id="IPR001971">
    <property type="entry name" value="Ribosomal_uS11"/>
</dbReference>
<dbReference type="InterPro" id="IPR019981">
    <property type="entry name" value="Ribosomal_uS11_bac-type"/>
</dbReference>
<dbReference type="InterPro" id="IPR018102">
    <property type="entry name" value="Ribosomal_uS11_CS"/>
</dbReference>
<dbReference type="InterPro" id="IPR036967">
    <property type="entry name" value="Ribosomal_uS11_sf"/>
</dbReference>
<dbReference type="NCBIfam" id="NF003698">
    <property type="entry name" value="PRK05309.1"/>
    <property type="match status" value="1"/>
</dbReference>
<dbReference type="NCBIfam" id="TIGR03632">
    <property type="entry name" value="uS11_bact"/>
    <property type="match status" value="1"/>
</dbReference>
<dbReference type="PANTHER" id="PTHR11759">
    <property type="entry name" value="40S RIBOSOMAL PROTEIN S14/30S RIBOSOMAL PROTEIN S11"/>
    <property type="match status" value="1"/>
</dbReference>
<dbReference type="Pfam" id="PF00411">
    <property type="entry name" value="Ribosomal_S11"/>
    <property type="match status" value="1"/>
</dbReference>
<dbReference type="PIRSF" id="PIRSF002131">
    <property type="entry name" value="Ribosomal_S11"/>
    <property type="match status" value="1"/>
</dbReference>
<dbReference type="SUPFAM" id="SSF53137">
    <property type="entry name" value="Translational machinery components"/>
    <property type="match status" value="1"/>
</dbReference>
<dbReference type="PROSITE" id="PS00054">
    <property type="entry name" value="RIBOSOMAL_S11"/>
    <property type="match status" value="1"/>
</dbReference>
<organism>
    <name type="scientific">Lepidium virginicum</name>
    <name type="common">Virginia pepperweed</name>
    <dbReference type="NCBI Taxonomy" id="59292"/>
    <lineage>
        <taxon>Eukaryota</taxon>
        <taxon>Viridiplantae</taxon>
        <taxon>Streptophyta</taxon>
        <taxon>Embryophyta</taxon>
        <taxon>Tracheophyta</taxon>
        <taxon>Spermatophyta</taxon>
        <taxon>Magnoliopsida</taxon>
        <taxon>eudicotyledons</taxon>
        <taxon>Gunneridae</taxon>
        <taxon>Pentapetalae</taxon>
        <taxon>rosids</taxon>
        <taxon>malvids</taxon>
        <taxon>Brassicales</taxon>
        <taxon>Brassicaceae</taxon>
        <taxon>Lepidieae</taxon>
        <taxon>Lepidium</taxon>
    </lineage>
</organism>
<keyword id="KW-0150">Chloroplast</keyword>
<keyword id="KW-0934">Plastid</keyword>
<keyword id="KW-0687">Ribonucleoprotein</keyword>
<keyword id="KW-0689">Ribosomal protein</keyword>
<keyword id="KW-0694">RNA-binding</keyword>
<keyword id="KW-0699">rRNA-binding</keyword>
<name>RR11_LEPVR</name>
<geneLocation type="chloroplast"/>
<accession>A4QLD9</accession>
<proteinExistence type="inferred from homology"/>
<sequence length="138" mass="15024">MAKPILRIGSRKNTRSGSRKNVRRIPKGVIHVQASFNNTIVTVTDVRGRVISWSSAGTCGFRGTRRGTPFAAQTAAGNAIRAVVDQGMQRAEVRIKGPGLGRDAALRAIRRSGILLSFVRDVTPMPHNGCRPPKKRRV</sequence>
<protein>
    <recommendedName>
        <fullName evidence="1">Small ribosomal subunit protein uS11c</fullName>
    </recommendedName>
    <alternativeName>
        <fullName evidence="3">30S ribosomal protein S11, chloroplastic</fullName>
    </alternativeName>
</protein>
<comment type="subunit">
    <text evidence="1">Part of the 30S ribosomal subunit.</text>
</comment>
<comment type="subcellular location">
    <subcellularLocation>
        <location>Plastid</location>
        <location>Chloroplast</location>
    </subcellularLocation>
</comment>
<comment type="similarity">
    <text evidence="1">Belongs to the universal ribosomal protein uS11 family.</text>
</comment>
<evidence type="ECO:0000255" key="1">
    <source>
        <dbReference type="HAMAP-Rule" id="MF_01310"/>
    </source>
</evidence>
<evidence type="ECO:0000256" key="2">
    <source>
        <dbReference type="SAM" id="MobiDB-lite"/>
    </source>
</evidence>
<evidence type="ECO:0000305" key="3"/>
<gene>
    <name evidence="1" type="primary">rps11</name>
</gene>
<feature type="chain" id="PRO_0000294919" description="Small ribosomal subunit protein uS11c">
    <location>
        <begin position="1"/>
        <end position="138"/>
    </location>
</feature>
<feature type="region of interest" description="Disordered" evidence="2">
    <location>
        <begin position="1"/>
        <end position="23"/>
    </location>
</feature>
<feature type="compositionally biased region" description="Basic residues" evidence="2">
    <location>
        <begin position="9"/>
        <end position="23"/>
    </location>
</feature>
<reference key="1">
    <citation type="submission" date="2007-03" db="EMBL/GenBank/DDBJ databases">
        <title>Sequencing analysis of Lepidium virginicum JO26 chloroplast DNA.</title>
        <authorList>
            <person name="Hosouchi T."/>
            <person name="Tsuruoka H."/>
            <person name="Kotani H."/>
        </authorList>
    </citation>
    <scope>NUCLEOTIDE SEQUENCE [LARGE SCALE GENOMIC DNA]</scope>
</reference>